<protein>
    <recommendedName>
        <fullName>Bifunctional protein gal10</fullName>
    </recommendedName>
    <domain>
        <recommendedName>
            <fullName>UDP-glucose 4-epimerase</fullName>
            <ecNumber>5.1.3.2</ecNumber>
        </recommendedName>
        <alternativeName>
            <fullName>Galactowaldenase</fullName>
        </alternativeName>
    </domain>
    <domain>
        <recommendedName>
            <fullName>Aldose 1-epimerase</fullName>
            <ecNumber>5.1.3.3</ecNumber>
        </recommendedName>
        <alternativeName>
            <fullName>Galactose mutarotase</fullName>
        </alternativeName>
    </domain>
</protein>
<gene>
    <name type="primary">gal10</name>
    <name type="ORF">SPBPB2B2.12c</name>
</gene>
<keyword id="KW-0119">Carbohydrate metabolism</keyword>
<keyword id="KW-0299">Galactose metabolism</keyword>
<keyword id="KW-0413">Isomerase</keyword>
<keyword id="KW-0511">Multifunctional enzyme</keyword>
<keyword id="KW-0520">NAD</keyword>
<keyword id="KW-1185">Reference proteome</keyword>
<proteinExistence type="inferred from homology"/>
<comment type="function">
    <text evidence="1">Mutarotase converts alpha-aldose to the beta-anomer. It is active on D-glucose, L-arabinose, D-xylose, D-galactose, maltose and lactose (By similarity).</text>
</comment>
<comment type="catalytic activity">
    <reaction>
        <text>UDP-alpha-D-glucose = UDP-alpha-D-galactose</text>
        <dbReference type="Rhea" id="RHEA:22168"/>
        <dbReference type="ChEBI" id="CHEBI:58885"/>
        <dbReference type="ChEBI" id="CHEBI:66914"/>
        <dbReference type="EC" id="5.1.3.2"/>
    </reaction>
</comment>
<comment type="catalytic activity">
    <reaction evidence="3">
        <text>alpha-D-glucose = beta-D-glucose</text>
        <dbReference type="Rhea" id="RHEA:10264"/>
        <dbReference type="ChEBI" id="CHEBI:15903"/>
        <dbReference type="ChEBI" id="CHEBI:17925"/>
        <dbReference type="EC" id="5.1.3.3"/>
    </reaction>
</comment>
<comment type="cofactor">
    <cofactor>
        <name>NAD(+)</name>
        <dbReference type="ChEBI" id="CHEBI:57540"/>
    </cofactor>
</comment>
<comment type="pathway">
    <text>Carbohydrate metabolism; galactose metabolism.</text>
</comment>
<comment type="pathway">
    <text>Carbohydrate metabolism; hexose metabolism.</text>
</comment>
<comment type="similarity">
    <text evidence="4">In the N-terminal section; belongs to the NAD(P)-dependent epimerase/dehydratase family.</text>
</comment>
<comment type="similarity">
    <text evidence="4">In the C-terminal section; belongs to the aldose epimerase family.</text>
</comment>
<evidence type="ECO:0000250" key="1"/>
<evidence type="ECO:0000255" key="2"/>
<evidence type="ECO:0000255" key="3">
    <source>
        <dbReference type="PROSITE-ProRule" id="PRU10126"/>
    </source>
</evidence>
<evidence type="ECO:0000305" key="4"/>
<organism>
    <name type="scientific">Schizosaccharomyces pombe (strain 972 / ATCC 24843)</name>
    <name type="common">Fission yeast</name>
    <dbReference type="NCBI Taxonomy" id="284812"/>
    <lineage>
        <taxon>Eukaryota</taxon>
        <taxon>Fungi</taxon>
        <taxon>Dikarya</taxon>
        <taxon>Ascomycota</taxon>
        <taxon>Taphrinomycotina</taxon>
        <taxon>Schizosaccharomycetes</taxon>
        <taxon>Schizosaccharomycetales</taxon>
        <taxon>Schizosaccharomycetaceae</taxon>
        <taxon>Schizosaccharomyces</taxon>
    </lineage>
</organism>
<accession>Q9HDU3</accession>
<reference key="1">
    <citation type="journal article" date="2002" name="Nature">
        <title>The genome sequence of Schizosaccharomyces pombe.</title>
        <authorList>
            <person name="Wood V."/>
            <person name="Gwilliam R."/>
            <person name="Rajandream M.A."/>
            <person name="Lyne M.H."/>
            <person name="Lyne R."/>
            <person name="Stewart A."/>
            <person name="Sgouros J.G."/>
            <person name="Peat N."/>
            <person name="Hayles J."/>
            <person name="Baker S.G."/>
            <person name="Basham D."/>
            <person name="Bowman S."/>
            <person name="Brooks K."/>
            <person name="Brown D."/>
            <person name="Brown S."/>
            <person name="Chillingworth T."/>
            <person name="Churcher C.M."/>
            <person name="Collins M."/>
            <person name="Connor R."/>
            <person name="Cronin A."/>
            <person name="Davis P."/>
            <person name="Feltwell T."/>
            <person name="Fraser A."/>
            <person name="Gentles S."/>
            <person name="Goble A."/>
            <person name="Hamlin N."/>
            <person name="Harris D.E."/>
            <person name="Hidalgo J."/>
            <person name="Hodgson G."/>
            <person name="Holroyd S."/>
            <person name="Hornsby T."/>
            <person name="Howarth S."/>
            <person name="Huckle E.J."/>
            <person name="Hunt S."/>
            <person name="Jagels K."/>
            <person name="James K.D."/>
            <person name="Jones L."/>
            <person name="Jones M."/>
            <person name="Leather S."/>
            <person name="McDonald S."/>
            <person name="McLean J."/>
            <person name="Mooney P."/>
            <person name="Moule S."/>
            <person name="Mungall K.L."/>
            <person name="Murphy L.D."/>
            <person name="Niblett D."/>
            <person name="Odell C."/>
            <person name="Oliver K."/>
            <person name="O'Neil S."/>
            <person name="Pearson D."/>
            <person name="Quail M.A."/>
            <person name="Rabbinowitsch E."/>
            <person name="Rutherford K.M."/>
            <person name="Rutter S."/>
            <person name="Saunders D."/>
            <person name="Seeger K."/>
            <person name="Sharp S."/>
            <person name="Skelton J."/>
            <person name="Simmonds M.N."/>
            <person name="Squares R."/>
            <person name="Squares S."/>
            <person name="Stevens K."/>
            <person name="Taylor K."/>
            <person name="Taylor R.G."/>
            <person name="Tivey A."/>
            <person name="Walsh S.V."/>
            <person name="Warren T."/>
            <person name="Whitehead S."/>
            <person name="Woodward J.R."/>
            <person name="Volckaert G."/>
            <person name="Aert R."/>
            <person name="Robben J."/>
            <person name="Grymonprez B."/>
            <person name="Weltjens I."/>
            <person name="Vanstreels E."/>
            <person name="Rieger M."/>
            <person name="Schaefer M."/>
            <person name="Mueller-Auer S."/>
            <person name="Gabel C."/>
            <person name="Fuchs M."/>
            <person name="Duesterhoeft A."/>
            <person name="Fritzc C."/>
            <person name="Holzer E."/>
            <person name="Moestl D."/>
            <person name="Hilbert H."/>
            <person name="Borzym K."/>
            <person name="Langer I."/>
            <person name="Beck A."/>
            <person name="Lehrach H."/>
            <person name="Reinhardt R."/>
            <person name="Pohl T.M."/>
            <person name="Eger P."/>
            <person name="Zimmermann W."/>
            <person name="Wedler H."/>
            <person name="Wambutt R."/>
            <person name="Purnelle B."/>
            <person name="Goffeau A."/>
            <person name="Cadieu E."/>
            <person name="Dreano S."/>
            <person name="Gloux S."/>
            <person name="Lelaure V."/>
            <person name="Mottier S."/>
            <person name="Galibert F."/>
            <person name="Aves S.J."/>
            <person name="Xiang Z."/>
            <person name="Hunt C."/>
            <person name="Moore K."/>
            <person name="Hurst S.M."/>
            <person name="Lucas M."/>
            <person name="Rochet M."/>
            <person name="Gaillardin C."/>
            <person name="Tallada V.A."/>
            <person name="Garzon A."/>
            <person name="Thode G."/>
            <person name="Daga R.R."/>
            <person name="Cruzado L."/>
            <person name="Jimenez J."/>
            <person name="Sanchez M."/>
            <person name="del Rey F."/>
            <person name="Benito J."/>
            <person name="Dominguez A."/>
            <person name="Revuelta J.L."/>
            <person name="Moreno S."/>
            <person name="Armstrong J."/>
            <person name="Forsburg S.L."/>
            <person name="Cerutti L."/>
            <person name="Lowe T."/>
            <person name="McCombie W.R."/>
            <person name="Paulsen I."/>
            <person name="Potashkin J."/>
            <person name="Shpakovski G.V."/>
            <person name="Ussery D."/>
            <person name="Barrell B.G."/>
            <person name="Nurse P."/>
        </authorList>
    </citation>
    <scope>NUCLEOTIDE SEQUENCE [LARGE SCALE GENOMIC DNA]</scope>
    <source>
        <strain>972 / ATCC 24843</strain>
    </source>
</reference>
<dbReference type="EC" id="5.1.3.2"/>
<dbReference type="EC" id="5.1.3.3"/>
<dbReference type="EMBL" id="CU329671">
    <property type="protein sequence ID" value="CAC21414.1"/>
    <property type="molecule type" value="Genomic_DNA"/>
</dbReference>
<dbReference type="RefSeq" id="NP_596858.1">
    <property type="nucleotide sequence ID" value="NM_001023881.2"/>
</dbReference>
<dbReference type="SMR" id="Q9HDU3"/>
<dbReference type="BioGRID" id="277919">
    <property type="interactions" value="6"/>
</dbReference>
<dbReference type="FunCoup" id="Q9HDU3">
    <property type="interactions" value="282"/>
</dbReference>
<dbReference type="STRING" id="284812.Q9HDU3"/>
<dbReference type="iPTMnet" id="Q9HDU3"/>
<dbReference type="PaxDb" id="4896-SPBPB2B2.12c.1"/>
<dbReference type="EnsemblFungi" id="SPBPB2B2.12c.1">
    <property type="protein sequence ID" value="SPBPB2B2.12c.1:pep"/>
    <property type="gene ID" value="SPBPB2B2.12c"/>
</dbReference>
<dbReference type="GeneID" id="2541411"/>
<dbReference type="KEGG" id="spo:2541411"/>
<dbReference type="PomBase" id="SPBPB2B2.12c">
    <property type="gene designation" value="gal10"/>
</dbReference>
<dbReference type="VEuPathDB" id="FungiDB:SPBPB2B2.12c"/>
<dbReference type="eggNOG" id="KOG1371">
    <property type="taxonomic scope" value="Eukaryota"/>
</dbReference>
<dbReference type="HOGENOM" id="CLU_007383_22_1_1"/>
<dbReference type="InParanoid" id="Q9HDU3"/>
<dbReference type="OMA" id="KGLYREW"/>
<dbReference type="PhylomeDB" id="Q9HDU3"/>
<dbReference type="BRENDA" id="5.1.3.2">
    <property type="organism ID" value="5613"/>
</dbReference>
<dbReference type="Reactome" id="R-SPO-70370">
    <property type="pathway name" value="Galactose catabolism"/>
</dbReference>
<dbReference type="UniPathway" id="UPA00214"/>
<dbReference type="UniPathway" id="UPA00242"/>
<dbReference type="PRO" id="PR:Q9HDU3"/>
<dbReference type="Proteomes" id="UP000002485">
    <property type="component" value="Chromosome II"/>
</dbReference>
<dbReference type="GO" id="GO:0005829">
    <property type="term" value="C:cytosol"/>
    <property type="evidence" value="ECO:0000318"/>
    <property type="project" value="GO_Central"/>
</dbReference>
<dbReference type="GO" id="GO:0004034">
    <property type="term" value="F:aldose 1-epimerase activity"/>
    <property type="evidence" value="ECO:0000266"/>
    <property type="project" value="PomBase"/>
</dbReference>
<dbReference type="GO" id="GO:0030246">
    <property type="term" value="F:carbohydrate binding"/>
    <property type="evidence" value="ECO:0007669"/>
    <property type="project" value="InterPro"/>
</dbReference>
<dbReference type="GO" id="GO:0003978">
    <property type="term" value="F:UDP-glucose 4-epimerase activity"/>
    <property type="evidence" value="ECO:0000315"/>
    <property type="project" value="PomBase"/>
</dbReference>
<dbReference type="GO" id="GO:0006012">
    <property type="term" value="P:galactose metabolic process"/>
    <property type="evidence" value="ECO:0007669"/>
    <property type="project" value="UniProtKB-UniPathway"/>
</dbReference>
<dbReference type="GO" id="GO:0005996">
    <property type="term" value="P:monosaccharide metabolic process"/>
    <property type="evidence" value="ECO:0000318"/>
    <property type="project" value="GO_Central"/>
</dbReference>
<dbReference type="GO" id="GO:0052574">
    <property type="term" value="P:UDP-galactose biosynthetic process"/>
    <property type="evidence" value="ECO:0000315"/>
    <property type="project" value="PomBase"/>
</dbReference>
<dbReference type="CDD" id="cd09019">
    <property type="entry name" value="galactose_mutarotase_like"/>
    <property type="match status" value="1"/>
</dbReference>
<dbReference type="CDD" id="cd05247">
    <property type="entry name" value="UDP_G4E_1_SDR_e"/>
    <property type="match status" value="1"/>
</dbReference>
<dbReference type="FunFam" id="2.70.98.10:FF:000025">
    <property type="entry name" value="GAL10 bifunctional protein"/>
    <property type="match status" value="1"/>
</dbReference>
<dbReference type="Gene3D" id="2.70.98.10">
    <property type="match status" value="1"/>
</dbReference>
<dbReference type="Gene3D" id="3.40.50.720">
    <property type="entry name" value="NAD(P)-binding Rossmann-like Domain"/>
    <property type="match status" value="1"/>
</dbReference>
<dbReference type="Gene3D" id="3.90.25.10">
    <property type="entry name" value="UDP-galactose 4-epimerase, domain 1"/>
    <property type="match status" value="1"/>
</dbReference>
<dbReference type="InterPro" id="IPR018052">
    <property type="entry name" value="Ald1_epimerase_CS"/>
</dbReference>
<dbReference type="InterPro" id="IPR008183">
    <property type="entry name" value="Aldose_1/G6P_1-epimerase"/>
</dbReference>
<dbReference type="InterPro" id="IPR001509">
    <property type="entry name" value="Epimerase_deHydtase"/>
</dbReference>
<dbReference type="InterPro" id="IPR011013">
    <property type="entry name" value="Gal_mutarotase_sf_dom"/>
</dbReference>
<dbReference type="InterPro" id="IPR047215">
    <property type="entry name" value="Galactose_mutarotase-like"/>
</dbReference>
<dbReference type="InterPro" id="IPR014718">
    <property type="entry name" value="GH-type_carb-bd"/>
</dbReference>
<dbReference type="InterPro" id="IPR036291">
    <property type="entry name" value="NAD(P)-bd_dom_sf"/>
</dbReference>
<dbReference type="InterPro" id="IPR005886">
    <property type="entry name" value="UDP_G4E"/>
</dbReference>
<dbReference type="NCBIfam" id="TIGR01179">
    <property type="entry name" value="galE"/>
    <property type="match status" value="1"/>
</dbReference>
<dbReference type="NCBIfam" id="NF007956">
    <property type="entry name" value="PRK10675.1"/>
    <property type="match status" value="1"/>
</dbReference>
<dbReference type="PANTHER" id="PTHR43725">
    <property type="entry name" value="UDP-GLUCOSE 4-EPIMERASE"/>
    <property type="match status" value="1"/>
</dbReference>
<dbReference type="PANTHER" id="PTHR43725:SF47">
    <property type="entry name" value="UDP-GLUCOSE 4-EPIMERASE"/>
    <property type="match status" value="1"/>
</dbReference>
<dbReference type="Pfam" id="PF01263">
    <property type="entry name" value="Aldose_epim"/>
    <property type="match status" value="1"/>
</dbReference>
<dbReference type="Pfam" id="PF01370">
    <property type="entry name" value="Epimerase"/>
    <property type="match status" value="1"/>
</dbReference>
<dbReference type="SUPFAM" id="SSF74650">
    <property type="entry name" value="Galactose mutarotase-like"/>
    <property type="match status" value="1"/>
</dbReference>
<dbReference type="SUPFAM" id="SSF51735">
    <property type="entry name" value="NAD(P)-binding Rossmann-fold domains"/>
    <property type="match status" value="1"/>
</dbReference>
<dbReference type="PROSITE" id="PS00545">
    <property type="entry name" value="ALDOSE_1_EPIMERASE"/>
    <property type="match status" value="1"/>
</dbReference>
<name>GAL10_SCHPO</name>
<sequence length="713" mass="80666">MAVQDEYILVTGGAGYIGSHTVIELINHGYKVIIVDNLCNSCYDAVARVEFIVRKSIKFFKLDLRDKEGLAQIFDTFKIKGVIHFAALKAVGESMKLPLEYYDNNICGTITLLNVMREHRVKTVVFSSSATVYGDATRFDNMIPIPESCPNDPTNPYGKTKYAIENIIKDLHTSDNTWRGAILRYFNPIGAHPSGLLGEDPLGIPNNLLPFLAQVAIGRREKLLVFGDDYDSHDGTPIRDYIHVVDLAKGHIAALNYLNKINNSEGMYREWNLGTGKGSSVFDIYHAFCKEVGKDLPYEVVGRRTGDVLNLTASPNRANSELKWKAELSITDACRDLWKWTIENPFGFQIDNYKWKLFNTLGIMDYKNRLHTICFQDLEVSIANYGALVQAVRYKGRNLVNGFNDFSRYKLKENPFFGATIGRFANRIANGQFEVDGHLYTLCKNENNKTTLHGGNNGFDKQFFLGPIARQYEDYNTLEFILVDKDGNNGFPSDLETLVKYTIKNNSLEIEYKSVIPEYSKLNVTAVNLTNHSYWNLASPNKTIDGTIIKSTTNVYLKVNSETSLPTGDIVEWQNDITKPTKLDPNISFDNCFIVDREASKFCLDTRKYSLKNIVEVIHPSVPVKLVVSTTEPAFQLYTGDGNDICEFQSRSGFCVETGRFINALNNEKWSKQVILRKGEVYGARSKFSLYAQDLEENKHFLDSASYNSGEYY</sequence>
<feature type="chain" id="PRO_0000197441" description="Bifunctional protein gal10">
    <location>
        <begin position="1"/>
        <end position="713"/>
    </location>
</feature>
<feature type="region of interest" description="Galactowaldenase">
    <location>
        <begin position="1"/>
        <end position="350"/>
    </location>
</feature>
<feature type="region of interest" description="Mutarotase">
    <location>
        <begin position="351"/>
        <end position="713"/>
    </location>
</feature>
<feature type="active site" description="For mutarotase activity" evidence="2">
    <location>
        <position position="532"/>
    </location>
</feature>
<feature type="binding site" evidence="2">
    <location>
        <begin position="7"/>
        <end position="38"/>
    </location>
    <ligand>
        <name>NAD(+)</name>
        <dbReference type="ChEBI" id="CHEBI:57540"/>
    </ligand>
</feature>